<reference key="1">
    <citation type="submission" date="2000-10" db="EMBL/GenBank/DDBJ databases">
        <title>Elav-type ribonucleoprotein-3.</title>
        <authorList>
            <person name="Suzuki H."/>
            <person name="Inoue K."/>
        </authorList>
    </citation>
    <scope>NUCLEOTIDE SEQUENCE [MRNA] (ISOFORM 2)</scope>
</reference>
<reference key="2">
    <citation type="submission" date="2000-11" db="EMBL/GenBank/DDBJ databases">
        <title>Isolation and molecular characterization of zebrafish Napor.</title>
        <authorList>
            <person name="Choi D.-K."/>
            <person name="Sakaki Y."/>
        </authorList>
    </citation>
    <scope>NUCLEOTIDE SEQUENCE [MRNA] (ISOFORM 5)</scope>
</reference>
<reference key="3">
    <citation type="submission" date="2005-04" db="EMBL/GenBank/DDBJ databases">
        <title>Splicing variants of zebrafish Napor.</title>
        <authorList>
            <person name="Takahashi N."/>
            <person name="Dawid I.B."/>
        </authorList>
    </citation>
    <scope>NUCLEOTIDE SEQUENCE [MRNA] (ISOFORMS 3 AND 4)</scope>
    <source>
        <strain>AB</strain>
    </source>
</reference>
<reference key="4">
    <citation type="journal article" date="2013" name="Nature">
        <title>The zebrafish reference genome sequence and its relationship to the human genome.</title>
        <authorList>
            <person name="Howe K."/>
            <person name="Clark M.D."/>
            <person name="Torroja C.F."/>
            <person name="Torrance J."/>
            <person name="Berthelot C."/>
            <person name="Muffato M."/>
            <person name="Collins J.E."/>
            <person name="Humphray S."/>
            <person name="McLaren K."/>
            <person name="Matthews L."/>
            <person name="McLaren S."/>
            <person name="Sealy I."/>
            <person name="Caccamo M."/>
            <person name="Churcher C."/>
            <person name="Scott C."/>
            <person name="Barrett J.C."/>
            <person name="Koch R."/>
            <person name="Rauch G.J."/>
            <person name="White S."/>
            <person name="Chow W."/>
            <person name="Kilian B."/>
            <person name="Quintais L.T."/>
            <person name="Guerra-Assuncao J.A."/>
            <person name="Zhou Y."/>
            <person name="Gu Y."/>
            <person name="Yen J."/>
            <person name="Vogel J.H."/>
            <person name="Eyre T."/>
            <person name="Redmond S."/>
            <person name="Banerjee R."/>
            <person name="Chi J."/>
            <person name="Fu B."/>
            <person name="Langley E."/>
            <person name="Maguire S.F."/>
            <person name="Laird G.K."/>
            <person name="Lloyd D."/>
            <person name="Kenyon E."/>
            <person name="Donaldson S."/>
            <person name="Sehra H."/>
            <person name="Almeida-King J."/>
            <person name="Loveland J."/>
            <person name="Trevanion S."/>
            <person name="Jones M."/>
            <person name="Quail M."/>
            <person name="Willey D."/>
            <person name="Hunt A."/>
            <person name="Burton J."/>
            <person name="Sims S."/>
            <person name="McLay K."/>
            <person name="Plumb B."/>
            <person name="Davis J."/>
            <person name="Clee C."/>
            <person name="Oliver K."/>
            <person name="Clark R."/>
            <person name="Riddle C."/>
            <person name="Elliot D."/>
            <person name="Threadgold G."/>
            <person name="Harden G."/>
            <person name="Ware D."/>
            <person name="Begum S."/>
            <person name="Mortimore B."/>
            <person name="Kerry G."/>
            <person name="Heath P."/>
            <person name="Phillimore B."/>
            <person name="Tracey A."/>
            <person name="Corby N."/>
            <person name="Dunn M."/>
            <person name="Johnson C."/>
            <person name="Wood J."/>
            <person name="Clark S."/>
            <person name="Pelan S."/>
            <person name="Griffiths G."/>
            <person name="Smith M."/>
            <person name="Glithero R."/>
            <person name="Howden P."/>
            <person name="Barker N."/>
            <person name="Lloyd C."/>
            <person name="Stevens C."/>
            <person name="Harley J."/>
            <person name="Holt K."/>
            <person name="Panagiotidis G."/>
            <person name="Lovell J."/>
            <person name="Beasley H."/>
            <person name="Henderson C."/>
            <person name="Gordon D."/>
            <person name="Auger K."/>
            <person name="Wright D."/>
            <person name="Collins J."/>
            <person name="Raisen C."/>
            <person name="Dyer L."/>
            <person name="Leung K."/>
            <person name="Robertson L."/>
            <person name="Ambridge K."/>
            <person name="Leongamornlert D."/>
            <person name="McGuire S."/>
            <person name="Gilderthorp R."/>
            <person name="Griffiths C."/>
            <person name="Manthravadi D."/>
            <person name="Nichol S."/>
            <person name="Barker G."/>
            <person name="Whitehead S."/>
            <person name="Kay M."/>
            <person name="Brown J."/>
            <person name="Murnane C."/>
            <person name="Gray E."/>
            <person name="Humphries M."/>
            <person name="Sycamore N."/>
            <person name="Barker D."/>
            <person name="Saunders D."/>
            <person name="Wallis J."/>
            <person name="Babbage A."/>
            <person name="Hammond S."/>
            <person name="Mashreghi-Mohammadi M."/>
            <person name="Barr L."/>
            <person name="Martin S."/>
            <person name="Wray P."/>
            <person name="Ellington A."/>
            <person name="Matthews N."/>
            <person name="Ellwood M."/>
            <person name="Woodmansey R."/>
            <person name="Clark G."/>
            <person name="Cooper J."/>
            <person name="Tromans A."/>
            <person name="Grafham D."/>
            <person name="Skuce C."/>
            <person name="Pandian R."/>
            <person name="Andrews R."/>
            <person name="Harrison E."/>
            <person name="Kimberley A."/>
            <person name="Garnett J."/>
            <person name="Fosker N."/>
            <person name="Hall R."/>
            <person name="Garner P."/>
            <person name="Kelly D."/>
            <person name="Bird C."/>
            <person name="Palmer S."/>
            <person name="Gehring I."/>
            <person name="Berger A."/>
            <person name="Dooley C.M."/>
            <person name="Ersan-Urun Z."/>
            <person name="Eser C."/>
            <person name="Geiger H."/>
            <person name="Geisler M."/>
            <person name="Karotki L."/>
            <person name="Kirn A."/>
            <person name="Konantz J."/>
            <person name="Konantz M."/>
            <person name="Oberlander M."/>
            <person name="Rudolph-Geiger S."/>
            <person name="Teucke M."/>
            <person name="Lanz C."/>
            <person name="Raddatz G."/>
            <person name="Osoegawa K."/>
            <person name="Zhu B."/>
            <person name="Rapp A."/>
            <person name="Widaa S."/>
            <person name="Langford C."/>
            <person name="Yang F."/>
            <person name="Schuster S.C."/>
            <person name="Carter N.P."/>
            <person name="Harrow J."/>
            <person name="Ning Z."/>
            <person name="Herrero J."/>
            <person name="Searle S.M."/>
            <person name="Enright A."/>
            <person name="Geisler R."/>
            <person name="Plasterk R.H."/>
            <person name="Lee C."/>
            <person name="Westerfield M."/>
            <person name="de Jong P.J."/>
            <person name="Zon L.I."/>
            <person name="Postlethwait J.H."/>
            <person name="Nusslein-Volhard C."/>
            <person name="Hubbard T.J."/>
            <person name="Roest Crollius H."/>
            <person name="Rogers J."/>
            <person name="Stemple D.L."/>
        </authorList>
    </citation>
    <scope>NUCLEOTIDE SEQUENCE [LARGE SCALE GENOMIC DNA]</scope>
    <source>
        <strain>Tuebingen</strain>
    </source>
</reference>
<reference key="5">
    <citation type="submission" date="2004-01" db="EMBL/GenBank/DDBJ databases">
        <authorList>
            <consortium name="NIH - Zebrafish Gene Collection (ZGC) project"/>
        </authorList>
    </citation>
    <scope>NUCLEOTIDE SEQUENCE [LARGE SCALE MRNA] (ISOFORM 1)</scope>
    <source>
        <tissue>Pharyngula</tissue>
    </source>
</reference>
<organism>
    <name type="scientific">Danio rerio</name>
    <name type="common">Zebrafish</name>
    <name type="synonym">Brachydanio rerio</name>
    <dbReference type="NCBI Taxonomy" id="7955"/>
    <lineage>
        <taxon>Eukaryota</taxon>
        <taxon>Metazoa</taxon>
        <taxon>Chordata</taxon>
        <taxon>Craniata</taxon>
        <taxon>Vertebrata</taxon>
        <taxon>Euteleostomi</taxon>
        <taxon>Actinopterygii</taxon>
        <taxon>Neopterygii</taxon>
        <taxon>Teleostei</taxon>
        <taxon>Ostariophysi</taxon>
        <taxon>Cypriniformes</taxon>
        <taxon>Danionidae</taxon>
        <taxon>Danioninae</taxon>
        <taxon>Danio</taxon>
    </lineage>
</organism>
<feature type="chain" id="PRO_0000295194" description="CUGBP Elav-like family member 2">
    <location>
        <begin position="1"/>
        <end position="514"/>
    </location>
</feature>
<feature type="domain" description="RRM 1" evidence="4">
    <location>
        <begin position="44"/>
        <end position="127"/>
    </location>
</feature>
<feature type="domain" description="RRM 2" evidence="4">
    <location>
        <begin position="136"/>
        <end position="216"/>
    </location>
</feature>
<feature type="domain" description="RRM 3" evidence="4">
    <location>
        <begin position="429"/>
        <end position="507"/>
    </location>
</feature>
<feature type="splice variant" id="VSP_026817" description="In isoform 2 and isoform 5." evidence="5 6">
    <location>
        <begin position="1"/>
        <end position="28"/>
    </location>
</feature>
<feature type="splice variant" id="VSP_026818" description="In isoform 4." evidence="7">
    <original>MRYPSTANSAVSMRSTEELLLS</original>
    <variation>MTSSYNLDFLPEMMVDGRLLSAGERI</variation>
    <location>
        <begin position="1"/>
        <end position="22"/>
    </location>
</feature>
<feature type="splice variant" id="VSP_026819" description="In isoform 3." evidence="7">
    <original>M</original>
    <variation>MLEHSSELGFVPSVCVDSM</variation>
    <location>
        <position position="1"/>
    </location>
</feature>
<feature type="splice variant" id="VSP_026820" description="In isoform 3, isoform 4 and isoform 5." evidence="6 7">
    <location>
        <begin position="279"/>
        <end position="323"/>
    </location>
</feature>
<feature type="splice variant" id="VSP_026821" description="In isoform 3." evidence="7">
    <location>
        <begin position="362"/>
        <end position="365"/>
    </location>
</feature>
<sequence length="514" mass="54552">MRYPSTANSAVSMRSTEELLLSNGTAGKMNGALEHSDQPDPDAIKMFVGQIPRSWSEKELKELFEPYGAVYQINILRDRSQNPPQSKGCCFVTFYTRKAALEAQNALHNIKTLTGMHHPIQMKPADSEKSNAVEDRKLFIGMVSKKCNENDIRVMFSPYGQIEECRILRGPDGLSRGCAFVTFSTRAMAQNAIKAMHQSQTMEGCSSPMVVKFADTQKDKEQRRLQQQLAQQMQQLNSASAWGSLTGLTGLTPQYLALLQQATSSSNLGAFSGIQQMAGMNALQLQNLATLAAAAAAAQSSASPSTASALTSSTGSLGALASPAGSTANSSAAMGSLGSLGTLQGLAGATVGLNNINALAGSVNSMAALNGGLGSTGLSNGSAGPMDALTQAYSGIQQYAAAALPTLYSQSLLQQQSAAGSQKEGPEGANLFIYHLPQEFGDQDILQMFMPFGNVVSAKVFIDKQTNLSKCFGFVSYDNPVSAQAAIQAMNGFQIGMKRLKVQLKRSKNDSKPY</sequence>
<protein>
    <recommendedName>
        <fullName>CUGBP Elav-like family member 2</fullName>
        <shortName>CELF-2</shortName>
    </recommendedName>
    <alternativeName>
        <fullName>Bruno-like protein 3</fullName>
    </alternativeName>
    <alternativeName>
        <fullName>CUG triplet repeat RNA-binding protein 2</fullName>
        <shortName>CUG-BP2</shortName>
    </alternativeName>
    <alternativeName>
        <fullName>CUG-BP- and ETR-3-like factor 2</fullName>
    </alternativeName>
    <alternativeName>
        <fullName>ELAV-type RNA-binding protein 3</fullName>
        <shortName>ETR-3</shortName>
    </alternativeName>
    <alternativeName>
        <fullName>RNA-binding protein BRUNOL-3</fullName>
    </alternativeName>
</protein>
<evidence type="ECO:0000250" key="1"/>
<evidence type="ECO:0000250" key="2">
    <source>
        <dbReference type="UniProtKB" id="O95319"/>
    </source>
</evidence>
<evidence type="ECO:0000250" key="3">
    <source>
        <dbReference type="UniProtKB" id="Q7T2T1"/>
    </source>
</evidence>
<evidence type="ECO:0000255" key="4">
    <source>
        <dbReference type="PROSITE-ProRule" id="PRU00176"/>
    </source>
</evidence>
<evidence type="ECO:0000303" key="5">
    <source ref="1"/>
</evidence>
<evidence type="ECO:0000303" key="6">
    <source ref="2"/>
</evidence>
<evidence type="ECO:0000303" key="7">
    <source ref="3"/>
</evidence>
<evidence type="ECO:0000305" key="8"/>
<proteinExistence type="evidence at transcript level"/>
<name>CELF2_DANRE</name>
<gene>
    <name type="primary">celf2</name>
    <name type="synonym">cugbp2</name>
    <name type="synonym">etr3</name>
</gene>
<keyword id="KW-0025">Alternative splicing</keyword>
<keyword id="KW-0963">Cytoplasm</keyword>
<keyword id="KW-0507">mRNA processing</keyword>
<keyword id="KW-0539">Nucleus</keyword>
<keyword id="KW-1185">Reference proteome</keyword>
<keyword id="KW-0677">Repeat</keyword>
<keyword id="KW-0678">Repressor</keyword>
<keyword id="KW-0694">RNA-binding</keyword>
<accession>Q6P0B1</accession>
<accession>Q4U0V4</accession>
<accession>Q4U0V6</accession>
<accession>Q8QGX2</accession>
<accession>Q90ZV0</accession>
<dbReference type="EMBL" id="AB050496">
    <property type="protein sequence ID" value="BAB87828.1"/>
    <property type="molecule type" value="mRNA"/>
</dbReference>
<dbReference type="EMBL" id="AF321194">
    <property type="protein sequence ID" value="AAK52851.1"/>
    <property type="molecule type" value="mRNA"/>
</dbReference>
<dbReference type="EMBL" id="DQ021474">
    <property type="protein sequence ID" value="AAY43159.1"/>
    <property type="molecule type" value="mRNA"/>
</dbReference>
<dbReference type="EMBL" id="DQ021476">
    <property type="protein sequence ID" value="AAY43161.1"/>
    <property type="molecule type" value="mRNA"/>
</dbReference>
<dbReference type="EMBL" id="AL935165">
    <property type="protein sequence ID" value="CAH68907.2"/>
    <property type="molecule type" value="Genomic_DNA"/>
</dbReference>
<dbReference type="EMBL" id="AL935165">
    <property type="protein sequence ID" value="CAH68908.2"/>
    <property type="molecule type" value="Genomic_DNA"/>
</dbReference>
<dbReference type="EMBL" id="BX511190">
    <property type="status" value="NOT_ANNOTATED_CDS"/>
    <property type="molecule type" value="Genomic_DNA"/>
</dbReference>
<dbReference type="EMBL" id="BC065686">
    <property type="protein sequence ID" value="AAH65686.1"/>
    <property type="molecule type" value="mRNA"/>
</dbReference>
<dbReference type="RefSeq" id="NP_919382.1">
    <molecule id="Q6P0B1-2"/>
    <property type="nucleotide sequence ID" value="NM_194401.1"/>
</dbReference>
<dbReference type="RefSeq" id="XP_005164919.1">
    <molecule id="Q6P0B1-3"/>
    <property type="nucleotide sequence ID" value="XM_005164862.5"/>
</dbReference>
<dbReference type="RefSeq" id="XP_005164921.1">
    <molecule id="Q6P0B1-4"/>
    <property type="nucleotide sequence ID" value="XM_005164864.5"/>
</dbReference>
<dbReference type="BMRB" id="Q6P0B1"/>
<dbReference type="SMR" id="Q6P0B1"/>
<dbReference type="FunCoup" id="Q6P0B1">
    <property type="interactions" value="735"/>
</dbReference>
<dbReference type="STRING" id="7955.ENSDARP00000122415"/>
<dbReference type="PaxDb" id="7955-ENSDARP00000108480"/>
<dbReference type="Ensembl" id="ENSDART00000128368">
    <molecule id="Q6P0B1-1"/>
    <property type="protein sequence ID" value="ENSDARP00000112156"/>
    <property type="gene ID" value="ENSDARG00000002131"/>
</dbReference>
<dbReference type="GeneID" id="373117"/>
<dbReference type="KEGG" id="dre:373117"/>
<dbReference type="AGR" id="ZFIN:ZDB-GENE-030826-35"/>
<dbReference type="CTD" id="10659"/>
<dbReference type="ZFIN" id="ZDB-GENE-030826-35">
    <property type="gene designation" value="celf2"/>
</dbReference>
<dbReference type="eggNOG" id="KOG0144">
    <property type="taxonomic scope" value="Eukaryota"/>
</dbReference>
<dbReference type="InParanoid" id="Q6P0B1"/>
<dbReference type="OMA" id="NMANFAN"/>
<dbReference type="OrthoDB" id="410044at2759"/>
<dbReference type="PhylomeDB" id="Q6P0B1"/>
<dbReference type="PRO" id="PR:Q6P0B1"/>
<dbReference type="Proteomes" id="UP000000437">
    <property type="component" value="Alternate scaffold 4"/>
</dbReference>
<dbReference type="Proteomes" id="UP000000437">
    <property type="component" value="Chromosome 4"/>
</dbReference>
<dbReference type="Bgee" id="ENSDARG00000002131">
    <property type="expression patterns" value="Expressed in granulocyte and 25 other cell types or tissues"/>
</dbReference>
<dbReference type="ExpressionAtlas" id="Q6P0B1">
    <property type="expression patterns" value="baseline"/>
</dbReference>
<dbReference type="GO" id="GO:0005737">
    <property type="term" value="C:cytoplasm"/>
    <property type="evidence" value="ECO:0000318"/>
    <property type="project" value="GO_Central"/>
</dbReference>
<dbReference type="GO" id="GO:0005634">
    <property type="term" value="C:nucleus"/>
    <property type="evidence" value="ECO:0000318"/>
    <property type="project" value="GO_Central"/>
</dbReference>
<dbReference type="GO" id="GO:1990904">
    <property type="term" value="C:ribonucleoprotein complex"/>
    <property type="evidence" value="ECO:0000318"/>
    <property type="project" value="GO_Central"/>
</dbReference>
<dbReference type="GO" id="GO:0003730">
    <property type="term" value="F:mRNA 3'-UTR binding"/>
    <property type="evidence" value="ECO:0000318"/>
    <property type="project" value="GO_Central"/>
</dbReference>
<dbReference type="GO" id="GO:0006376">
    <property type="term" value="P:mRNA splice site recognition"/>
    <property type="evidence" value="ECO:0000318"/>
    <property type="project" value="GO_Central"/>
</dbReference>
<dbReference type="GO" id="GO:0000381">
    <property type="term" value="P:regulation of alternative mRNA splicing, via spliceosome"/>
    <property type="evidence" value="ECO:0000318"/>
    <property type="project" value="GO_Central"/>
</dbReference>
<dbReference type="CDD" id="cd12631">
    <property type="entry name" value="RRM1_CELF1_2_Bruno"/>
    <property type="match status" value="1"/>
</dbReference>
<dbReference type="CDD" id="cd12634">
    <property type="entry name" value="RRM2_CELF1_2"/>
    <property type="match status" value="1"/>
</dbReference>
<dbReference type="CDD" id="cd12638">
    <property type="entry name" value="RRM3_CELF1_2"/>
    <property type="match status" value="1"/>
</dbReference>
<dbReference type="FunFam" id="3.30.70.330:FF:000013">
    <property type="entry name" value="CUGBP Elav-like family member 1 isoform 2"/>
    <property type="match status" value="1"/>
</dbReference>
<dbReference type="FunFam" id="3.30.70.330:FF:000015">
    <property type="entry name" value="CUGBP Elav-like family member 1 isoform 2"/>
    <property type="match status" value="1"/>
</dbReference>
<dbReference type="FunFam" id="3.30.70.330:FF:000016">
    <property type="entry name" value="CUGBP Elav-like family member 1 isoform 2"/>
    <property type="match status" value="1"/>
</dbReference>
<dbReference type="Gene3D" id="3.30.70.330">
    <property type="match status" value="3"/>
</dbReference>
<dbReference type="InterPro" id="IPR034196">
    <property type="entry name" value="CELF1/2_RRM1"/>
</dbReference>
<dbReference type="InterPro" id="IPR034198">
    <property type="entry name" value="CELF1/2_RRM2"/>
</dbReference>
<dbReference type="InterPro" id="IPR034199">
    <property type="entry name" value="CELF1/2_RRM3"/>
</dbReference>
<dbReference type="InterPro" id="IPR002343">
    <property type="entry name" value="Hud_Sxl_RNA"/>
</dbReference>
<dbReference type="InterPro" id="IPR012677">
    <property type="entry name" value="Nucleotide-bd_a/b_plait_sf"/>
</dbReference>
<dbReference type="InterPro" id="IPR035979">
    <property type="entry name" value="RBD_domain_sf"/>
</dbReference>
<dbReference type="InterPro" id="IPR000504">
    <property type="entry name" value="RRM_dom"/>
</dbReference>
<dbReference type="PANTHER" id="PTHR24012">
    <property type="entry name" value="RNA BINDING PROTEIN"/>
    <property type="match status" value="1"/>
</dbReference>
<dbReference type="Pfam" id="PF00076">
    <property type="entry name" value="RRM_1"/>
    <property type="match status" value="3"/>
</dbReference>
<dbReference type="PRINTS" id="PR00961">
    <property type="entry name" value="HUDSXLRNA"/>
</dbReference>
<dbReference type="SMART" id="SM00360">
    <property type="entry name" value="RRM"/>
    <property type="match status" value="3"/>
</dbReference>
<dbReference type="SUPFAM" id="SSF54928">
    <property type="entry name" value="RNA-binding domain, RBD"/>
    <property type="match status" value="2"/>
</dbReference>
<dbReference type="PROSITE" id="PS50102">
    <property type="entry name" value="RRM"/>
    <property type="match status" value="3"/>
</dbReference>
<comment type="function">
    <text evidence="1">RNA-binding protein implicated in the regulation of several post-transcriptional events. May be involved in pre-mRNA alternative splicing, mRNA translation repression and stability (By similarity).</text>
</comment>
<comment type="subcellular location">
    <subcellularLocation>
        <location evidence="2">Nucleus</location>
    </subcellularLocation>
    <subcellularLocation>
        <location evidence="3">Cytoplasm</location>
    </subcellularLocation>
</comment>
<comment type="alternative products">
    <event type="alternative splicing"/>
    <isoform>
        <id>Q6P0B1-1</id>
        <name>1</name>
        <sequence type="displayed"/>
    </isoform>
    <isoform>
        <id>Q6P0B1-2</id>
        <name>2</name>
        <sequence type="described" ref="VSP_026817"/>
    </isoform>
    <isoform>
        <id>Q6P0B1-3</id>
        <name>3</name>
        <sequence type="described" ref="VSP_026819 VSP_026820 VSP_026821"/>
    </isoform>
    <isoform>
        <id>Q6P0B1-4</id>
        <name>4</name>
        <name>Short</name>
        <sequence type="described" ref="VSP_026818 VSP_026820"/>
    </isoform>
    <isoform>
        <id>Q6P0B1-5</id>
        <name>5</name>
        <sequence type="described" ref="VSP_026817 VSP_026820"/>
    </isoform>
</comment>
<comment type="similarity">
    <text evidence="8">Belongs to the CELF/BRUNOL family.</text>
</comment>